<proteinExistence type="inferred from homology"/>
<keyword id="KW-0150">Chloroplast</keyword>
<keyword id="KW-0934">Plastid</keyword>
<keyword id="KW-0687">Ribonucleoprotein</keyword>
<keyword id="KW-0689">Ribosomal protein</keyword>
<keyword id="KW-0694">RNA-binding</keyword>
<keyword id="KW-0699">rRNA-binding</keyword>
<comment type="function">
    <text evidence="1">Binds 5S rRNA, forms part of the central protuberance of the 50S subunit.</text>
</comment>
<comment type="subunit">
    <text evidence="1">Part of the 50S ribosomal subunit; contacts the 5S rRNA.</text>
</comment>
<comment type="subcellular location">
    <subcellularLocation>
        <location>Plastid</location>
        <location>Chloroplast</location>
    </subcellularLocation>
</comment>
<comment type="similarity">
    <text evidence="2">Belongs to the universal ribosomal protein uL5 family.</text>
</comment>
<protein>
    <recommendedName>
        <fullName evidence="2">Large ribosomal subunit protein uL5c</fullName>
    </recommendedName>
    <alternativeName>
        <fullName>50S ribosomal protein L5, chloroplastic</fullName>
    </alternativeName>
</protein>
<name>RK5_TETOB</name>
<sequence length="180" mass="20568">MTQRLKKLYTEKIVPKFYKDFQYKNIHEVPSLKKIVINRGIGDASQNAKILETFLKELSIIAGQKGVITRSKKSIAGFKIRDKMPVGVSVTLRGDRMYGFLDRLIHLALPRVRDFQGINPKSFDKNGNYSLGLEEQLMFPEIEYDKIDQIRGMDISIVTTAKNQEEGLALLKEFGLPFQS</sequence>
<organism>
    <name type="scientific">Tetradesmus obliquus</name>
    <name type="common">Green alga</name>
    <name type="synonym">Acutodesmus obliquus</name>
    <dbReference type="NCBI Taxonomy" id="3088"/>
    <lineage>
        <taxon>Eukaryota</taxon>
        <taxon>Viridiplantae</taxon>
        <taxon>Chlorophyta</taxon>
        <taxon>core chlorophytes</taxon>
        <taxon>Chlorophyceae</taxon>
        <taxon>CS clade</taxon>
        <taxon>Sphaeropleales</taxon>
        <taxon>Scenedesmaceae</taxon>
        <taxon>Tetradesmus</taxon>
    </lineage>
</organism>
<accession>Q1KVR2</accession>
<feature type="chain" id="PRO_0000243096" description="Large ribosomal subunit protein uL5c">
    <location>
        <begin position="1"/>
        <end position="180"/>
    </location>
</feature>
<gene>
    <name type="primary">rpl5</name>
</gene>
<geneLocation type="chloroplast"/>
<dbReference type="EMBL" id="DQ396875">
    <property type="protein sequence ID" value="ABD48295.1"/>
    <property type="molecule type" value="Genomic_DNA"/>
</dbReference>
<dbReference type="RefSeq" id="YP_636012.1">
    <property type="nucleotide sequence ID" value="NC_008101.1"/>
</dbReference>
<dbReference type="SMR" id="Q1KVR2"/>
<dbReference type="GeneID" id="4099845"/>
<dbReference type="GO" id="GO:0009507">
    <property type="term" value="C:chloroplast"/>
    <property type="evidence" value="ECO:0007669"/>
    <property type="project" value="UniProtKB-SubCell"/>
</dbReference>
<dbReference type="GO" id="GO:1990904">
    <property type="term" value="C:ribonucleoprotein complex"/>
    <property type="evidence" value="ECO:0007669"/>
    <property type="project" value="UniProtKB-KW"/>
</dbReference>
<dbReference type="GO" id="GO:0005840">
    <property type="term" value="C:ribosome"/>
    <property type="evidence" value="ECO:0007669"/>
    <property type="project" value="UniProtKB-KW"/>
</dbReference>
<dbReference type="GO" id="GO:0019843">
    <property type="term" value="F:rRNA binding"/>
    <property type="evidence" value="ECO:0007669"/>
    <property type="project" value="UniProtKB-UniRule"/>
</dbReference>
<dbReference type="GO" id="GO:0003735">
    <property type="term" value="F:structural constituent of ribosome"/>
    <property type="evidence" value="ECO:0007669"/>
    <property type="project" value="InterPro"/>
</dbReference>
<dbReference type="GO" id="GO:0006412">
    <property type="term" value="P:translation"/>
    <property type="evidence" value="ECO:0007669"/>
    <property type="project" value="UniProtKB-UniRule"/>
</dbReference>
<dbReference type="FunFam" id="3.30.1440.10:FF:000001">
    <property type="entry name" value="50S ribosomal protein L5"/>
    <property type="match status" value="1"/>
</dbReference>
<dbReference type="Gene3D" id="3.30.1440.10">
    <property type="match status" value="1"/>
</dbReference>
<dbReference type="HAMAP" id="MF_01333_B">
    <property type="entry name" value="Ribosomal_uL5_B"/>
    <property type="match status" value="1"/>
</dbReference>
<dbReference type="InterPro" id="IPR002132">
    <property type="entry name" value="Ribosomal_uL5"/>
</dbReference>
<dbReference type="InterPro" id="IPR020930">
    <property type="entry name" value="Ribosomal_uL5_bac-type"/>
</dbReference>
<dbReference type="InterPro" id="IPR031309">
    <property type="entry name" value="Ribosomal_uL5_C"/>
</dbReference>
<dbReference type="InterPro" id="IPR020929">
    <property type="entry name" value="Ribosomal_uL5_CS"/>
</dbReference>
<dbReference type="InterPro" id="IPR022803">
    <property type="entry name" value="Ribosomal_uL5_dom_sf"/>
</dbReference>
<dbReference type="InterPro" id="IPR031310">
    <property type="entry name" value="Ribosomal_uL5_N"/>
</dbReference>
<dbReference type="NCBIfam" id="NF000585">
    <property type="entry name" value="PRK00010.1"/>
    <property type="match status" value="1"/>
</dbReference>
<dbReference type="PANTHER" id="PTHR11994">
    <property type="entry name" value="60S RIBOSOMAL PROTEIN L11-RELATED"/>
    <property type="match status" value="1"/>
</dbReference>
<dbReference type="Pfam" id="PF00281">
    <property type="entry name" value="Ribosomal_L5"/>
    <property type="match status" value="1"/>
</dbReference>
<dbReference type="Pfam" id="PF00673">
    <property type="entry name" value="Ribosomal_L5_C"/>
    <property type="match status" value="1"/>
</dbReference>
<dbReference type="PIRSF" id="PIRSF002161">
    <property type="entry name" value="Ribosomal_L5"/>
    <property type="match status" value="1"/>
</dbReference>
<dbReference type="SUPFAM" id="SSF55282">
    <property type="entry name" value="RL5-like"/>
    <property type="match status" value="1"/>
</dbReference>
<dbReference type="PROSITE" id="PS00358">
    <property type="entry name" value="RIBOSOMAL_L5"/>
    <property type="match status" value="1"/>
</dbReference>
<evidence type="ECO:0000250" key="1"/>
<evidence type="ECO:0000305" key="2"/>
<reference key="1">
    <citation type="journal article" date="2006" name="BMC Evol. Biol.">
        <title>The complete chloroplast genome sequence of the chlorophycean green alga Scenedesmus obliquus reveals a compact gene organization and a biased distribution of genes on the two DNA strands.</title>
        <authorList>
            <person name="de Cambiaire J.-C."/>
            <person name="Otis C."/>
            <person name="Lemieux C."/>
            <person name="Turmel M."/>
        </authorList>
    </citation>
    <scope>NUCLEOTIDE SEQUENCE [LARGE SCALE GENOMIC DNA]</scope>
    <source>
        <strain>UTEX 393</strain>
    </source>
</reference>